<gene>
    <name evidence="2" type="primary">infB</name>
    <name type="ordered locus">Cgl1985</name>
    <name type="ordered locus">cg2176</name>
</gene>
<keyword id="KW-0963">Cytoplasm</keyword>
<keyword id="KW-0342">GTP-binding</keyword>
<keyword id="KW-0396">Initiation factor</keyword>
<keyword id="KW-0547">Nucleotide-binding</keyword>
<keyword id="KW-0648">Protein biosynthesis</keyword>
<keyword id="KW-1185">Reference proteome</keyword>
<dbReference type="EMBL" id="BA000036">
    <property type="protein sequence ID" value="BAB99378.1"/>
    <property type="molecule type" value="Genomic_DNA"/>
</dbReference>
<dbReference type="EMBL" id="BX927153">
    <property type="protein sequence ID" value="CAF20326.1"/>
    <property type="molecule type" value="Genomic_DNA"/>
</dbReference>
<dbReference type="RefSeq" id="NP_601191.1">
    <property type="nucleotide sequence ID" value="NC_003450.3"/>
</dbReference>
<dbReference type="RefSeq" id="WP_011014802.1">
    <property type="nucleotide sequence ID" value="NC_003450.3"/>
</dbReference>
<dbReference type="RefSeq" id="WP_011265855.1">
    <property type="nucleotide sequence ID" value="NC_006958.1"/>
</dbReference>
<dbReference type="SMR" id="Q8NP40"/>
<dbReference type="STRING" id="196627.cg2176"/>
<dbReference type="GeneID" id="1019942"/>
<dbReference type="KEGG" id="cgb:cg2176"/>
<dbReference type="KEGG" id="cgl:Cgl1985"/>
<dbReference type="PATRIC" id="fig|196627.13.peg.1924"/>
<dbReference type="eggNOG" id="COG0532">
    <property type="taxonomic scope" value="Bacteria"/>
</dbReference>
<dbReference type="HOGENOM" id="CLU_006301_9_0_11"/>
<dbReference type="OrthoDB" id="9811804at2"/>
<dbReference type="BioCyc" id="CORYNE:G18NG-11577-MONOMER"/>
<dbReference type="Proteomes" id="UP000000582">
    <property type="component" value="Chromosome"/>
</dbReference>
<dbReference type="Proteomes" id="UP000001009">
    <property type="component" value="Chromosome"/>
</dbReference>
<dbReference type="GO" id="GO:0005829">
    <property type="term" value="C:cytosol"/>
    <property type="evidence" value="ECO:0007669"/>
    <property type="project" value="TreeGrafter"/>
</dbReference>
<dbReference type="GO" id="GO:0005525">
    <property type="term" value="F:GTP binding"/>
    <property type="evidence" value="ECO:0007669"/>
    <property type="project" value="UniProtKB-KW"/>
</dbReference>
<dbReference type="GO" id="GO:0003924">
    <property type="term" value="F:GTPase activity"/>
    <property type="evidence" value="ECO:0007669"/>
    <property type="project" value="UniProtKB-UniRule"/>
</dbReference>
<dbReference type="GO" id="GO:0003743">
    <property type="term" value="F:translation initiation factor activity"/>
    <property type="evidence" value="ECO:0007669"/>
    <property type="project" value="UniProtKB-UniRule"/>
</dbReference>
<dbReference type="CDD" id="cd01887">
    <property type="entry name" value="IF2_eIF5B"/>
    <property type="match status" value="1"/>
</dbReference>
<dbReference type="CDD" id="cd03702">
    <property type="entry name" value="IF2_mtIF2_II"/>
    <property type="match status" value="1"/>
</dbReference>
<dbReference type="CDD" id="cd03692">
    <property type="entry name" value="mtIF2_IVc"/>
    <property type="match status" value="1"/>
</dbReference>
<dbReference type="FunFam" id="2.40.30.10:FF:000007">
    <property type="entry name" value="Translation initiation factor IF-2"/>
    <property type="match status" value="1"/>
</dbReference>
<dbReference type="FunFam" id="2.40.30.10:FF:000008">
    <property type="entry name" value="Translation initiation factor IF-2"/>
    <property type="match status" value="1"/>
</dbReference>
<dbReference type="FunFam" id="3.40.50.10050:FF:000001">
    <property type="entry name" value="Translation initiation factor IF-2"/>
    <property type="match status" value="1"/>
</dbReference>
<dbReference type="FunFam" id="3.40.50.300:FF:000019">
    <property type="entry name" value="Translation initiation factor IF-2"/>
    <property type="match status" value="1"/>
</dbReference>
<dbReference type="Gene3D" id="1.10.10.2480">
    <property type="match status" value="1"/>
</dbReference>
<dbReference type="Gene3D" id="3.40.50.300">
    <property type="entry name" value="P-loop containing nucleotide triphosphate hydrolases"/>
    <property type="match status" value="1"/>
</dbReference>
<dbReference type="Gene3D" id="2.40.30.10">
    <property type="entry name" value="Translation factors"/>
    <property type="match status" value="2"/>
</dbReference>
<dbReference type="Gene3D" id="3.40.50.10050">
    <property type="entry name" value="Translation initiation factor IF- 2, domain 3"/>
    <property type="match status" value="1"/>
</dbReference>
<dbReference type="HAMAP" id="MF_00100_B">
    <property type="entry name" value="IF_2_B"/>
    <property type="match status" value="1"/>
</dbReference>
<dbReference type="InterPro" id="IPR053905">
    <property type="entry name" value="EF-G-like_DII"/>
</dbReference>
<dbReference type="InterPro" id="IPR044145">
    <property type="entry name" value="IF2_II"/>
</dbReference>
<dbReference type="InterPro" id="IPR006847">
    <property type="entry name" value="IF2_N"/>
</dbReference>
<dbReference type="InterPro" id="IPR027417">
    <property type="entry name" value="P-loop_NTPase"/>
</dbReference>
<dbReference type="InterPro" id="IPR005225">
    <property type="entry name" value="Small_GTP-bd"/>
</dbReference>
<dbReference type="InterPro" id="IPR000795">
    <property type="entry name" value="T_Tr_GTP-bd_dom"/>
</dbReference>
<dbReference type="InterPro" id="IPR000178">
    <property type="entry name" value="TF_IF2_bacterial-like"/>
</dbReference>
<dbReference type="InterPro" id="IPR015760">
    <property type="entry name" value="TIF_IF2"/>
</dbReference>
<dbReference type="InterPro" id="IPR023115">
    <property type="entry name" value="TIF_IF2_dom3"/>
</dbReference>
<dbReference type="InterPro" id="IPR036925">
    <property type="entry name" value="TIF_IF2_dom3_sf"/>
</dbReference>
<dbReference type="InterPro" id="IPR009000">
    <property type="entry name" value="Transl_B-barrel_sf"/>
</dbReference>
<dbReference type="NCBIfam" id="TIGR00487">
    <property type="entry name" value="IF-2"/>
    <property type="match status" value="1"/>
</dbReference>
<dbReference type="NCBIfam" id="TIGR00231">
    <property type="entry name" value="small_GTP"/>
    <property type="match status" value="1"/>
</dbReference>
<dbReference type="PANTHER" id="PTHR43381:SF5">
    <property type="entry name" value="TR-TYPE G DOMAIN-CONTAINING PROTEIN"/>
    <property type="match status" value="1"/>
</dbReference>
<dbReference type="PANTHER" id="PTHR43381">
    <property type="entry name" value="TRANSLATION INITIATION FACTOR IF-2-RELATED"/>
    <property type="match status" value="1"/>
</dbReference>
<dbReference type="Pfam" id="PF22042">
    <property type="entry name" value="EF-G_D2"/>
    <property type="match status" value="1"/>
</dbReference>
<dbReference type="Pfam" id="PF00009">
    <property type="entry name" value="GTP_EFTU"/>
    <property type="match status" value="1"/>
</dbReference>
<dbReference type="Pfam" id="PF11987">
    <property type="entry name" value="IF-2"/>
    <property type="match status" value="1"/>
</dbReference>
<dbReference type="Pfam" id="PF04760">
    <property type="entry name" value="IF2_N"/>
    <property type="match status" value="2"/>
</dbReference>
<dbReference type="PRINTS" id="PR00315">
    <property type="entry name" value="ELONGATNFCT"/>
</dbReference>
<dbReference type="SUPFAM" id="SSF52156">
    <property type="entry name" value="Initiation factor IF2/eIF5b, domain 3"/>
    <property type="match status" value="1"/>
</dbReference>
<dbReference type="SUPFAM" id="SSF52540">
    <property type="entry name" value="P-loop containing nucleoside triphosphate hydrolases"/>
    <property type="match status" value="1"/>
</dbReference>
<dbReference type="SUPFAM" id="SSF50447">
    <property type="entry name" value="Translation proteins"/>
    <property type="match status" value="2"/>
</dbReference>
<dbReference type="PROSITE" id="PS51722">
    <property type="entry name" value="G_TR_2"/>
    <property type="match status" value="1"/>
</dbReference>
<protein>
    <recommendedName>
        <fullName evidence="2">Translation initiation factor IF-2</fullName>
    </recommendedName>
</protein>
<comment type="function">
    <text evidence="2">One of the essential components for the initiation of protein synthesis. Protects formylmethionyl-tRNA from spontaneous hydrolysis and promotes its binding to the 30S ribosomal subunits. Also involved in the hydrolysis of GTP during the formation of the 70S ribosomal complex.</text>
</comment>
<comment type="subcellular location">
    <subcellularLocation>
        <location evidence="2">Cytoplasm</location>
    </subcellularLocation>
</comment>
<comment type="similarity">
    <text evidence="2">Belongs to the TRAFAC class translation factor GTPase superfamily. Classic translation factor GTPase family. IF-2 subfamily.</text>
</comment>
<feature type="chain" id="PRO_0000137197" description="Translation initiation factor IF-2">
    <location>
        <begin position="1"/>
        <end position="1004"/>
    </location>
</feature>
<feature type="domain" description="tr-type G">
    <location>
        <begin position="499"/>
        <end position="671"/>
    </location>
</feature>
<feature type="region of interest" description="Disordered" evidence="3">
    <location>
        <begin position="36"/>
        <end position="393"/>
    </location>
</feature>
<feature type="region of interest" description="G1" evidence="1">
    <location>
        <begin position="508"/>
        <end position="515"/>
    </location>
</feature>
<feature type="region of interest" description="G2" evidence="1">
    <location>
        <begin position="533"/>
        <end position="537"/>
    </location>
</feature>
<feature type="region of interest" description="G3" evidence="1">
    <location>
        <begin position="558"/>
        <end position="561"/>
    </location>
</feature>
<feature type="region of interest" description="G4" evidence="1">
    <location>
        <begin position="612"/>
        <end position="615"/>
    </location>
</feature>
<feature type="region of interest" description="G5" evidence="1">
    <location>
        <begin position="648"/>
        <end position="650"/>
    </location>
</feature>
<feature type="compositionally biased region" description="Low complexity" evidence="3">
    <location>
        <begin position="62"/>
        <end position="157"/>
    </location>
</feature>
<feature type="compositionally biased region" description="Low complexity" evidence="3">
    <location>
        <begin position="173"/>
        <end position="183"/>
    </location>
</feature>
<feature type="compositionally biased region" description="Pro residues" evidence="3">
    <location>
        <begin position="184"/>
        <end position="196"/>
    </location>
</feature>
<feature type="compositionally biased region" description="Pro residues" evidence="3">
    <location>
        <begin position="219"/>
        <end position="236"/>
    </location>
</feature>
<feature type="compositionally biased region" description="Gly residues" evidence="3">
    <location>
        <begin position="237"/>
        <end position="249"/>
    </location>
</feature>
<feature type="compositionally biased region" description="Gly residues" evidence="3">
    <location>
        <begin position="261"/>
        <end position="277"/>
    </location>
</feature>
<feature type="compositionally biased region" description="Low complexity" evidence="3">
    <location>
        <begin position="279"/>
        <end position="303"/>
    </location>
</feature>
<feature type="compositionally biased region" description="Gly residues" evidence="3">
    <location>
        <begin position="330"/>
        <end position="373"/>
    </location>
</feature>
<feature type="compositionally biased region" description="Basic residues" evidence="3">
    <location>
        <begin position="377"/>
        <end position="386"/>
    </location>
</feature>
<feature type="binding site" evidence="2">
    <location>
        <begin position="508"/>
        <end position="515"/>
    </location>
    <ligand>
        <name>GTP</name>
        <dbReference type="ChEBI" id="CHEBI:37565"/>
    </ligand>
</feature>
<feature type="binding site" evidence="2">
    <location>
        <begin position="558"/>
        <end position="562"/>
    </location>
    <ligand>
        <name>GTP</name>
        <dbReference type="ChEBI" id="CHEBI:37565"/>
    </ligand>
</feature>
<feature type="binding site" evidence="2">
    <location>
        <begin position="612"/>
        <end position="615"/>
    </location>
    <ligand>
        <name>GTP</name>
        <dbReference type="ChEBI" id="CHEBI:37565"/>
    </ligand>
</feature>
<feature type="sequence conflict" description="In Ref. 2; CAF20326." evidence="4" ref="2">
    <original>P</original>
    <variation>R</variation>
    <location>
        <position position="81"/>
    </location>
</feature>
<organism>
    <name type="scientific">Corynebacterium glutamicum (strain ATCC 13032 / DSM 20300 / JCM 1318 / BCRC 11384 / CCUG 27702 / LMG 3730 / NBRC 12168 / NCIMB 10025 / NRRL B-2784 / 534)</name>
    <dbReference type="NCBI Taxonomy" id="196627"/>
    <lineage>
        <taxon>Bacteria</taxon>
        <taxon>Bacillati</taxon>
        <taxon>Actinomycetota</taxon>
        <taxon>Actinomycetes</taxon>
        <taxon>Mycobacteriales</taxon>
        <taxon>Corynebacteriaceae</taxon>
        <taxon>Corynebacterium</taxon>
    </lineage>
</organism>
<name>IF2_CORGL</name>
<evidence type="ECO:0000250" key="1"/>
<evidence type="ECO:0000255" key="2">
    <source>
        <dbReference type="HAMAP-Rule" id="MF_00100"/>
    </source>
</evidence>
<evidence type="ECO:0000256" key="3">
    <source>
        <dbReference type="SAM" id="MobiDB-lite"/>
    </source>
</evidence>
<evidence type="ECO:0000305" key="4"/>
<reference key="1">
    <citation type="journal article" date="2003" name="Appl. Microbiol. Biotechnol.">
        <title>The Corynebacterium glutamicum genome: features and impacts on biotechnological processes.</title>
        <authorList>
            <person name="Ikeda M."/>
            <person name="Nakagawa S."/>
        </authorList>
    </citation>
    <scope>NUCLEOTIDE SEQUENCE [LARGE SCALE GENOMIC DNA]</scope>
    <source>
        <strain>ATCC 13032 / DSM 20300 / JCM 1318 / BCRC 11384 / CCUG 27702 / LMG 3730 / NBRC 12168 / NCIMB 10025 / NRRL B-2784 / 534</strain>
    </source>
</reference>
<reference key="2">
    <citation type="journal article" date="2003" name="J. Biotechnol.">
        <title>The complete Corynebacterium glutamicum ATCC 13032 genome sequence and its impact on the production of L-aspartate-derived amino acids and vitamins.</title>
        <authorList>
            <person name="Kalinowski J."/>
            <person name="Bathe B."/>
            <person name="Bartels D."/>
            <person name="Bischoff N."/>
            <person name="Bott M."/>
            <person name="Burkovski A."/>
            <person name="Dusch N."/>
            <person name="Eggeling L."/>
            <person name="Eikmanns B.J."/>
            <person name="Gaigalat L."/>
            <person name="Goesmann A."/>
            <person name="Hartmann M."/>
            <person name="Huthmacher K."/>
            <person name="Kraemer R."/>
            <person name="Linke B."/>
            <person name="McHardy A.C."/>
            <person name="Meyer F."/>
            <person name="Moeckel B."/>
            <person name="Pfefferle W."/>
            <person name="Puehler A."/>
            <person name="Rey D.A."/>
            <person name="Rueckert C."/>
            <person name="Rupp O."/>
            <person name="Sahm H."/>
            <person name="Wendisch V.F."/>
            <person name="Wiegraebe I."/>
            <person name="Tauch A."/>
        </authorList>
    </citation>
    <scope>NUCLEOTIDE SEQUENCE [LARGE SCALE GENOMIC DNA]</scope>
    <source>
        <strain>ATCC 13032 / DSM 20300 / JCM 1318 / BCRC 11384 / CCUG 27702 / LMG 3730 / NBRC 12168 / NCIMB 10025 / NRRL B-2784 / 534</strain>
    </source>
</reference>
<sequence length="1004" mass="103413">MPGKLRVHELAKQLGITSKELLATLKDKGEFVKTASSTIEPPVVKRMQEHYGSSGSDKSDTAAKPAAAKPAAPKPAASAAPKPGAPAKPAAPAAKPAPAAPSAASAAKPGAAPKPGVQAKPAAAAKPGAPAKPAAPAAPSAAKSGSAPKPAAAAKPAFSGPTPGDAAKKAEPAAKPGAEAPRPGGMPRPMGKPAPKPGARAPRVANNPFSTGGGERPAPRPGGGPRPGGGPRPGGGPRPQGQGRPGGQRDGQRDGQRDGQGNRGGQRQGAGAGGPRPQGGPRPQGGSRPQGGSAQGAQGAPSQERQGGGRRPSPAMMPPTPGQMPAKAPGKGGRGGQAGGGAGGGFNRGGGTGGGAGRGGRRGGTAGAFGRPGGAPRRGRKSKRQKRNEYESMQAPNVIGGVRLPDGKGATIRLARGASLADFADKIGADAAALVQALFNLGEMVTATASVSDETLQLLGEEMNYKVQVVSPEDEDRELLESFDLQFGEDEGGEADLAKRPPVVTVMGHVDHGKTRLLDTIRKANVGSDEAGGITQGIGAYQVKVNVEDTERTITFLDTPGHEAFTAMRARGAKSTDIAVLVVAADDGVMPQTVEAINHAKAADVPIVVAVNKIDKPEASPEKIRGQLTEYGLIPEEYGGDTIFVDISAKQGLNIDELLASVCLTADAELDLVANPEMDAQGVAIEAHLDRGRGPVATVIVQRGTLRVGDSIVAGDTYGRVRRMVDEYGRDVEEAGPSRPVQVQGLNGVPGAGDNLLVVEDDRIARQIANQRNARKRNALAARSRKRVSLEDLDSVLKEHSTLNLILKGDNAGSVEALEEALLKIEMDDEVQLNIIDRGVGAVTQTNVTLAAASDAVIIAFNVRAEGKATEEANAEGVDVRYYTIIYRAIEEVEAALKGMLKPIYEERVIGHAEIRAIFKASSVGLIAGCMVEDGKVRRNATVRIIRDGNVIAENAKIVSLRREKDDATEVSAGYECGMVLSYPDISVDDKIEVYEMVEVPREA</sequence>
<proteinExistence type="inferred from homology"/>
<accession>Q8NP40</accession>